<evidence type="ECO:0000255" key="1">
    <source>
        <dbReference type="HAMAP-Rule" id="MF_00444"/>
    </source>
</evidence>
<dbReference type="EC" id="3.4.21.92" evidence="1"/>
<dbReference type="EMBL" id="AP009324">
    <property type="protein sequence ID" value="BAF77648.1"/>
    <property type="molecule type" value="Genomic_DNA"/>
</dbReference>
<dbReference type="RefSeq" id="WP_001049165.1">
    <property type="nucleotide sequence ID" value="NZ_CTYB01000039.1"/>
</dbReference>
<dbReference type="PDB" id="9K2A">
    <property type="method" value="X-ray"/>
    <property type="resolution" value="2.19 A"/>
    <property type="chains" value="A/B/C/D/E/F/G/H/I/J/K/L/M/N=1-195"/>
</dbReference>
<dbReference type="PDB" id="9K2B">
    <property type="method" value="X-ray"/>
    <property type="resolution" value="2.45 A"/>
    <property type="chains" value="A/B/C/D/E/F/G/H/I/J/K/L/M/N=1-195"/>
</dbReference>
<dbReference type="PDB" id="9K2C">
    <property type="method" value="X-ray"/>
    <property type="resolution" value="1.98 A"/>
    <property type="chains" value="A/B/C/D/E/F/G/H/I/J/K/L/M/N=1-195"/>
</dbReference>
<dbReference type="PDB" id="9K2D">
    <property type="method" value="X-ray"/>
    <property type="resolution" value="1.98 A"/>
    <property type="chains" value="A/B/C/D/E/F/G/H/I/J/K/L/M/N=1-195"/>
</dbReference>
<dbReference type="PDB" id="9K2K">
    <property type="method" value="X-ray"/>
    <property type="resolution" value="2.74 A"/>
    <property type="chains" value="A/B/C/D/E/F/G/H/I/J/K/L/M/N=1-195"/>
</dbReference>
<dbReference type="PDBsum" id="9K2A"/>
<dbReference type="PDBsum" id="9K2B"/>
<dbReference type="PDBsum" id="9K2C"/>
<dbReference type="PDBsum" id="9K2D"/>
<dbReference type="PDBsum" id="9K2K"/>
<dbReference type="SMR" id="A7WZR9"/>
<dbReference type="MEROPS" id="S14.001"/>
<dbReference type="GeneID" id="98345115"/>
<dbReference type="KEGG" id="saw:SAHV_0765"/>
<dbReference type="HOGENOM" id="CLU_058707_3_2_9"/>
<dbReference type="GO" id="GO:0005737">
    <property type="term" value="C:cytoplasm"/>
    <property type="evidence" value="ECO:0007669"/>
    <property type="project" value="UniProtKB-SubCell"/>
</dbReference>
<dbReference type="GO" id="GO:0009368">
    <property type="term" value="C:endopeptidase Clp complex"/>
    <property type="evidence" value="ECO:0007669"/>
    <property type="project" value="TreeGrafter"/>
</dbReference>
<dbReference type="GO" id="GO:0004176">
    <property type="term" value="F:ATP-dependent peptidase activity"/>
    <property type="evidence" value="ECO:0007669"/>
    <property type="project" value="InterPro"/>
</dbReference>
<dbReference type="GO" id="GO:0051117">
    <property type="term" value="F:ATPase binding"/>
    <property type="evidence" value="ECO:0007669"/>
    <property type="project" value="TreeGrafter"/>
</dbReference>
<dbReference type="GO" id="GO:0004252">
    <property type="term" value="F:serine-type endopeptidase activity"/>
    <property type="evidence" value="ECO:0007669"/>
    <property type="project" value="UniProtKB-UniRule"/>
</dbReference>
<dbReference type="GO" id="GO:0006515">
    <property type="term" value="P:protein quality control for misfolded or incompletely synthesized proteins"/>
    <property type="evidence" value="ECO:0007669"/>
    <property type="project" value="TreeGrafter"/>
</dbReference>
<dbReference type="CDD" id="cd07017">
    <property type="entry name" value="S14_ClpP_2"/>
    <property type="match status" value="1"/>
</dbReference>
<dbReference type="FunFam" id="3.90.226.10:FF:000001">
    <property type="entry name" value="ATP-dependent Clp protease proteolytic subunit"/>
    <property type="match status" value="1"/>
</dbReference>
<dbReference type="Gene3D" id="3.90.226.10">
    <property type="entry name" value="2-enoyl-CoA Hydratase, Chain A, domain 1"/>
    <property type="match status" value="1"/>
</dbReference>
<dbReference type="HAMAP" id="MF_00444">
    <property type="entry name" value="ClpP"/>
    <property type="match status" value="1"/>
</dbReference>
<dbReference type="InterPro" id="IPR001907">
    <property type="entry name" value="ClpP"/>
</dbReference>
<dbReference type="InterPro" id="IPR029045">
    <property type="entry name" value="ClpP/crotonase-like_dom_sf"/>
</dbReference>
<dbReference type="InterPro" id="IPR023562">
    <property type="entry name" value="ClpP/TepA"/>
</dbReference>
<dbReference type="InterPro" id="IPR033135">
    <property type="entry name" value="ClpP_His_AS"/>
</dbReference>
<dbReference type="InterPro" id="IPR018215">
    <property type="entry name" value="ClpP_Ser_AS"/>
</dbReference>
<dbReference type="NCBIfam" id="TIGR00493">
    <property type="entry name" value="clpP"/>
    <property type="match status" value="1"/>
</dbReference>
<dbReference type="NCBIfam" id="NF001368">
    <property type="entry name" value="PRK00277.1"/>
    <property type="match status" value="1"/>
</dbReference>
<dbReference type="NCBIfam" id="NF009205">
    <property type="entry name" value="PRK12553.1"/>
    <property type="match status" value="1"/>
</dbReference>
<dbReference type="PANTHER" id="PTHR10381">
    <property type="entry name" value="ATP-DEPENDENT CLP PROTEASE PROTEOLYTIC SUBUNIT"/>
    <property type="match status" value="1"/>
</dbReference>
<dbReference type="PANTHER" id="PTHR10381:SF70">
    <property type="entry name" value="ATP-DEPENDENT CLP PROTEASE PROTEOLYTIC SUBUNIT"/>
    <property type="match status" value="1"/>
</dbReference>
<dbReference type="Pfam" id="PF00574">
    <property type="entry name" value="CLP_protease"/>
    <property type="match status" value="1"/>
</dbReference>
<dbReference type="PRINTS" id="PR00127">
    <property type="entry name" value="CLPPROTEASEP"/>
</dbReference>
<dbReference type="SUPFAM" id="SSF52096">
    <property type="entry name" value="ClpP/crotonase"/>
    <property type="match status" value="1"/>
</dbReference>
<dbReference type="PROSITE" id="PS00382">
    <property type="entry name" value="CLP_PROTEASE_HIS"/>
    <property type="match status" value="1"/>
</dbReference>
<dbReference type="PROSITE" id="PS00381">
    <property type="entry name" value="CLP_PROTEASE_SER"/>
    <property type="match status" value="1"/>
</dbReference>
<gene>
    <name evidence="1" type="primary">clpP</name>
    <name type="ordered locus">SAHV_0765</name>
</gene>
<organism>
    <name type="scientific">Staphylococcus aureus (strain Mu3 / ATCC 700698)</name>
    <dbReference type="NCBI Taxonomy" id="418127"/>
    <lineage>
        <taxon>Bacteria</taxon>
        <taxon>Bacillati</taxon>
        <taxon>Bacillota</taxon>
        <taxon>Bacilli</taxon>
        <taxon>Bacillales</taxon>
        <taxon>Staphylococcaceae</taxon>
        <taxon>Staphylococcus</taxon>
    </lineage>
</organism>
<protein>
    <recommendedName>
        <fullName evidence="1">ATP-dependent Clp protease proteolytic subunit</fullName>
        <ecNumber evidence="1">3.4.21.92</ecNumber>
    </recommendedName>
    <alternativeName>
        <fullName evidence="1">Endopeptidase Clp</fullName>
    </alternativeName>
</protein>
<proteinExistence type="evidence at protein level"/>
<accession>A7WZR9</accession>
<name>CLPP_STAA1</name>
<reference key="1">
    <citation type="journal article" date="2008" name="Antimicrob. Agents Chemother.">
        <title>Mutated response regulator graR is responsible for phenotypic conversion of Staphylococcus aureus from heterogeneous vancomycin-intermediate resistance to vancomycin-intermediate resistance.</title>
        <authorList>
            <person name="Neoh H.-M."/>
            <person name="Cui L."/>
            <person name="Yuzawa H."/>
            <person name="Takeuchi F."/>
            <person name="Matsuo M."/>
            <person name="Hiramatsu K."/>
        </authorList>
    </citation>
    <scope>NUCLEOTIDE SEQUENCE [LARGE SCALE GENOMIC DNA]</scope>
    <source>
        <strain>Mu3 / ATCC 700698</strain>
    </source>
</reference>
<feature type="chain" id="PRO_1000026133" description="ATP-dependent Clp protease proteolytic subunit">
    <location>
        <begin position="1"/>
        <end position="195"/>
    </location>
</feature>
<feature type="active site" description="Nucleophile" evidence="1">
    <location>
        <position position="98"/>
    </location>
</feature>
<feature type="active site" evidence="1">
    <location>
        <position position="123"/>
    </location>
</feature>
<keyword id="KW-0002">3D-structure</keyword>
<keyword id="KW-0963">Cytoplasm</keyword>
<keyword id="KW-0378">Hydrolase</keyword>
<keyword id="KW-0645">Protease</keyword>
<keyword id="KW-0720">Serine protease</keyword>
<sequence length="195" mass="21514">MNLIPTVIETTNRGERAYDIYSRLLKDRIIMLGSQIDDNVANSIVSQLLFLQAQDSEKDIYLYINSPGGSVTAGFAIYDTIQHIKPDVQTICIGMAASMGSFLLAAGAKGKRFALPNAEVMIHQPLGGAQGQATEIEIAANHILKTREKLNRILSERTGQSIEKIQKDTDRDNFLTAEEAKEYGLIDEVMVPETK</sequence>
<comment type="function">
    <text evidence="1">Cleaves peptides in various proteins in a process that requires ATP hydrolysis. Has a chymotrypsin-like activity. Plays a major role in the degradation of misfolded proteins.</text>
</comment>
<comment type="catalytic activity">
    <reaction evidence="1">
        <text>Hydrolysis of proteins to small peptides in the presence of ATP and magnesium. alpha-casein is the usual test substrate. In the absence of ATP, only oligopeptides shorter than five residues are hydrolyzed (such as succinyl-Leu-Tyr-|-NHMec, and Leu-Tyr-Leu-|-Tyr-Trp, in which cleavage of the -Tyr-|-Leu- and -Tyr-|-Trp bonds also occurs).</text>
        <dbReference type="EC" id="3.4.21.92"/>
    </reaction>
</comment>
<comment type="subunit">
    <text evidence="1">Fourteen ClpP subunits assemble into 2 heptameric rings which stack back to back to give a disk-like structure with a central cavity, resembling the structure of eukaryotic proteasomes.</text>
</comment>
<comment type="subcellular location">
    <subcellularLocation>
        <location evidence="1">Cytoplasm</location>
    </subcellularLocation>
</comment>
<comment type="similarity">
    <text evidence="1">Belongs to the peptidase S14 family.</text>
</comment>